<protein>
    <recommendedName>
        <fullName>Cytosolic Fe-S cluster assembly factor NAR1</fullName>
    </recommendedName>
    <alternativeName>
        <fullName>Nuclear architecture-related protein 1</fullName>
    </alternativeName>
</protein>
<name>NAR1_SCLS1</name>
<proteinExistence type="inferred from homology"/>
<feature type="chain" id="PRO_0000383739" description="Cytosolic Fe-S cluster assembly factor NAR1">
    <location>
        <begin position="1"/>
        <end position="571"/>
    </location>
</feature>
<feature type="region of interest" description="Disordered" evidence="3">
    <location>
        <begin position="415"/>
        <end position="437"/>
    </location>
</feature>
<feature type="binding site" evidence="2">
    <location>
        <position position="20"/>
    </location>
    <ligand>
        <name>[4Fe-4S] cluster</name>
        <dbReference type="ChEBI" id="CHEBI:49883"/>
        <label>1</label>
    </ligand>
</feature>
<feature type="binding site" evidence="2">
    <location>
        <position position="62"/>
    </location>
    <ligand>
        <name>[4Fe-4S] cluster</name>
        <dbReference type="ChEBI" id="CHEBI:49883"/>
        <label>1</label>
    </ligand>
</feature>
<feature type="binding site" evidence="2">
    <location>
        <position position="65"/>
    </location>
    <ligand>
        <name>[4Fe-4S] cluster</name>
        <dbReference type="ChEBI" id="CHEBI:49883"/>
        <label>1</label>
    </ligand>
</feature>
<feature type="binding site" evidence="2">
    <location>
        <position position="68"/>
    </location>
    <ligand>
        <name>[4Fe-4S] cluster</name>
        <dbReference type="ChEBI" id="CHEBI:49883"/>
        <label>1</label>
    </ligand>
</feature>
<feature type="binding site" evidence="2">
    <location>
        <position position="204"/>
    </location>
    <ligand>
        <name>[4Fe-4S] cluster</name>
        <dbReference type="ChEBI" id="CHEBI:49883"/>
        <label>2</label>
    </ligand>
</feature>
<feature type="binding site" evidence="2">
    <location>
        <position position="259"/>
    </location>
    <ligand>
        <name>[4Fe-4S] cluster</name>
        <dbReference type="ChEBI" id="CHEBI:49883"/>
        <label>2</label>
    </ligand>
</feature>
<feature type="binding site" evidence="2">
    <location>
        <position position="449"/>
    </location>
    <ligand>
        <name>[4Fe-4S] cluster</name>
        <dbReference type="ChEBI" id="CHEBI:49883"/>
        <label>2</label>
    </ligand>
</feature>
<feature type="binding site" evidence="2">
    <location>
        <position position="453"/>
    </location>
    <ligand>
        <name>[4Fe-4S] cluster</name>
        <dbReference type="ChEBI" id="CHEBI:49883"/>
        <label>2</label>
    </ligand>
</feature>
<sequence length="571" mass="61372">MSAILSADDLNDFISPGVACIKPVETLPAAKPSADNELEISFNTDAPLPSDLPPAQISLTDCLACSGCVTSAEAVLVSLQSHAEVLSQLDSAPGLRLYKNATGTGIKVEGVEQGGKIYVASVSPQSRASIAATFGVTEREAGYMIEHLLSGPKGIKNRAVYRNAFQWVVDTNITREACLVLGAEEVIASMTDTGSKKPVLTSSCPGWVCYAEKTHPHVLPHLSRMKSPQALMGTLIKTTLSRKLGISPDRIWHVAVMPCFDKKLEASREELTDAVWEGTGTRGVRDVDSVITSKELLMLADSRGIEFSKLPRTPIPTSSRIPFPDTKIDSFLFPSNRKGSGNGNRDAGTSGGNLHYALHYFASQHKGSSIQTIKGRNVDVVDYTVVAENGEILLKAARYYGFRNIQNLVRRLKPAKPSRMPGGKPIGSARRPNGKASGPDYSYVEVMACPGGCTNGGGQIKVDDPINTSRLEGDAKAGPQEQKMWLAQVDEAYFSGEDNVESSSVDDRNDLVEGISPSYIKDTLSHWAATTGLDLERLVYTTYREVVSDVGKNVGDAERVIEIAGKIGGGW</sequence>
<reference key="1">
    <citation type="journal article" date="2011" name="PLoS Genet.">
        <title>Genomic analysis of the necrotrophic fungal pathogens Sclerotinia sclerotiorum and Botrytis cinerea.</title>
        <authorList>
            <person name="Amselem J."/>
            <person name="Cuomo C.A."/>
            <person name="van Kan J.A.L."/>
            <person name="Viaud M."/>
            <person name="Benito E.P."/>
            <person name="Couloux A."/>
            <person name="Coutinho P.M."/>
            <person name="de Vries R.P."/>
            <person name="Dyer P.S."/>
            <person name="Fillinger S."/>
            <person name="Fournier E."/>
            <person name="Gout L."/>
            <person name="Hahn M."/>
            <person name="Kohn L."/>
            <person name="Lapalu N."/>
            <person name="Plummer K.M."/>
            <person name="Pradier J.-M."/>
            <person name="Quevillon E."/>
            <person name="Sharon A."/>
            <person name="Simon A."/>
            <person name="ten Have A."/>
            <person name="Tudzynski B."/>
            <person name="Tudzynski P."/>
            <person name="Wincker P."/>
            <person name="Andrew M."/>
            <person name="Anthouard V."/>
            <person name="Beever R.E."/>
            <person name="Beffa R."/>
            <person name="Benoit I."/>
            <person name="Bouzid O."/>
            <person name="Brault B."/>
            <person name="Chen Z."/>
            <person name="Choquer M."/>
            <person name="Collemare J."/>
            <person name="Cotton P."/>
            <person name="Danchin E.G."/>
            <person name="Da Silva C."/>
            <person name="Gautier A."/>
            <person name="Giraud C."/>
            <person name="Giraud T."/>
            <person name="Gonzalez C."/>
            <person name="Grossetete S."/>
            <person name="Gueldener U."/>
            <person name="Henrissat B."/>
            <person name="Howlett B.J."/>
            <person name="Kodira C."/>
            <person name="Kretschmer M."/>
            <person name="Lappartient A."/>
            <person name="Leroch M."/>
            <person name="Levis C."/>
            <person name="Mauceli E."/>
            <person name="Neuveglise C."/>
            <person name="Oeser B."/>
            <person name="Pearson M."/>
            <person name="Poulain J."/>
            <person name="Poussereau N."/>
            <person name="Quesneville H."/>
            <person name="Rascle C."/>
            <person name="Schumacher J."/>
            <person name="Segurens B."/>
            <person name="Sexton A."/>
            <person name="Silva E."/>
            <person name="Sirven C."/>
            <person name="Soanes D.M."/>
            <person name="Talbot N.J."/>
            <person name="Templeton M."/>
            <person name="Yandava C."/>
            <person name="Yarden O."/>
            <person name="Zeng Q."/>
            <person name="Rollins J.A."/>
            <person name="Lebrun M.-H."/>
            <person name="Dickman M."/>
        </authorList>
    </citation>
    <scope>NUCLEOTIDE SEQUENCE [LARGE SCALE GENOMIC DNA]</scope>
    <source>
        <strain>ATCC 18683 / 1980 / Ss-1</strain>
    </source>
</reference>
<organism>
    <name type="scientific">Sclerotinia sclerotiorum (strain ATCC 18683 / 1980 / Ss-1)</name>
    <name type="common">White mold</name>
    <name type="synonym">Whetzelinia sclerotiorum</name>
    <dbReference type="NCBI Taxonomy" id="665079"/>
    <lineage>
        <taxon>Eukaryota</taxon>
        <taxon>Fungi</taxon>
        <taxon>Dikarya</taxon>
        <taxon>Ascomycota</taxon>
        <taxon>Pezizomycotina</taxon>
        <taxon>Leotiomycetes</taxon>
        <taxon>Helotiales</taxon>
        <taxon>Sclerotiniaceae</taxon>
        <taxon>Sclerotinia</taxon>
    </lineage>
</organism>
<comment type="function">
    <text evidence="1">Component of the cytosolic Fe/S protein assembly machinery. Required for maturation of extramitochondrial Fe/S proteins. May play a role in the transfer of pre-assembled Fe/S clusters to target apoproteins (By similarity).</text>
</comment>
<comment type="similarity">
    <text evidence="4">Belongs to the NARF family.</text>
</comment>
<evidence type="ECO:0000250" key="1"/>
<evidence type="ECO:0000255" key="2"/>
<evidence type="ECO:0000256" key="3">
    <source>
        <dbReference type="SAM" id="MobiDB-lite"/>
    </source>
</evidence>
<evidence type="ECO:0000305" key="4"/>
<dbReference type="EMBL" id="CH476622">
    <property type="protein sequence ID" value="EDN96276.1"/>
    <property type="molecule type" value="Genomic_DNA"/>
</dbReference>
<dbReference type="RefSeq" id="XP_001597008.1">
    <property type="nucleotide sequence ID" value="XM_001596958.1"/>
</dbReference>
<dbReference type="SMR" id="A7E7C4"/>
<dbReference type="FunCoup" id="A7E7C4">
    <property type="interactions" value="355"/>
</dbReference>
<dbReference type="STRING" id="665079.A7E7C4"/>
<dbReference type="EnsemblFungi" id="EDN96276">
    <property type="protein sequence ID" value="EDN96276"/>
    <property type="gene ID" value="SS1G_01201"/>
</dbReference>
<dbReference type="GeneID" id="5493434"/>
<dbReference type="KEGG" id="ssl:SS1G_01201"/>
<dbReference type="VEuPathDB" id="FungiDB:sscle_01g010590"/>
<dbReference type="eggNOG" id="KOG2439">
    <property type="taxonomic scope" value="Eukaryota"/>
</dbReference>
<dbReference type="HOGENOM" id="CLU_018240_0_1_1"/>
<dbReference type="InParanoid" id="A7E7C4"/>
<dbReference type="OMA" id="GYLHHVL"/>
<dbReference type="OrthoDB" id="10253113at2759"/>
<dbReference type="Proteomes" id="UP000001312">
    <property type="component" value="Unassembled WGS sequence"/>
</dbReference>
<dbReference type="GO" id="GO:0097361">
    <property type="term" value="C:cytosolic [4Fe-4S] assembly targeting complex"/>
    <property type="evidence" value="ECO:0000318"/>
    <property type="project" value="GO_Central"/>
</dbReference>
<dbReference type="GO" id="GO:0051539">
    <property type="term" value="F:4 iron, 4 sulfur cluster binding"/>
    <property type="evidence" value="ECO:0007669"/>
    <property type="project" value="UniProtKB-KW"/>
</dbReference>
<dbReference type="GO" id="GO:0051536">
    <property type="term" value="F:iron-sulfur cluster binding"/>
    <property type="evidence" value="ECO:0000250"/>
    <property type="project" value="UniProtKB"/>
</dbReference>
<dbReference type="GO" id="GO:0046872">
    <property type="term" value="F:metal ion binding"/>
    <property type="evidence" value="ECO:0007669"/>
    <property type="project" value="UniProtKB-KW"/>
</dbReference>
<dbReference type="GO" id="GO:0016226">
    <property type="term" value="P:iron-sulfur cluster assembly"/>
    <property type="evidence" value="ECO:0000250"/>
    <property type="project" value="UniProtKB"/>
</dbReference>
<dbReference type="FunFam" id="3.40.50.1780:FF:000004">
    <property type="entry name" value="Cytosolic Fe-S cluster assembly factor nar1"/>
    <property type="match status" value="1"/>
</dbReference>
<dbReference type="Gene3D" id="3.40.50.1780">
    <property type="match status" value="1"/>
</dbReference>
<dbReference type="Gene3D" id="3.40.950.10">
    <property type="entry name" value="Fe-only Hydrogenase (Larger Subunit), Chain L, domain 3"/>
    <property type="match status" value="1"/>
</dbReference>
<dbReference type="InterPro" id="IPR050340">
    <property type="entry name" value="Cytosolic_Fe-S_CAF"/>
</dbReference>
<dbReference type="InterPro" id="IPR009016">
    <property type="entry name" value="Fe_hydrogenase"/>
</dbReference>
<dbReference type="InterPro" id="IPR004108">
    <property type="entry name" value="Fe_hydrogenase_lsu_C"/>
</dbReference>
<dbReference type="PANTHER" id="PTHR11615">
    <property type="entry name" value="NITRATE, FORMATE, IRON DEHYDROGENASE"/>
    <property type="match status" value="1"/>
</dbReference>
<dbReference type="Pfam" id="PF02906">
    <property type="entry name" value="Fe_hyd_lg_C"/>
    <property type="match status" value="1"/>
</dbReference>
<dbReference type="SUPFAM" id="SSF53920">
    <property type="entry name" value="Fe-only hydrogenase"/>
    <property type="match status" value="1"/>
</dbReference>
<keyword id="KW-0004">4Fe-4S</keyword>
<keyword id="KW-0408">Iron</keyword>
<keyword id="KW-0411">Iron-sulfur</keyword>
<keyword id="KW-0479">Metal-binding</keyword>
<keyword id="KW-1185">Reference proteome</keyword>
<gene>
    <name type="primary">NAR1</name>
    <name type="ORF">SS1G_01201</name>
</gene>
<accession>A7E7C4</accession>